<feature type="chain" id="PRO_0000344294" description="Small ribosomal subunit protein uS7">
    <location>
        <begin position="1"/>
        <end position="158"/>
    </location>
</feature>
<organism>
    <name type="scientific">Flavobacterium psychrophilum (strain ATCC 49511 / DSM 21280 / CIP 103535 / JIP02/86)</name>
    <dbReference type="NCBI Taxonomy" id="402612"/>
    <lineage>
        <taxon>Bacteria</taxon>
        <taxon>Pseudomonadati</taxon>
        <taxon>Bacteroidota</taxon>
        <taxon>Flavobacteriia</taxon>
        <taxon>Flavobacteriales</taxon>
        <taxon>Flavobacteriaceae</taxon>
        <taxon>Flavobacterium</taxon>
    </lineage>
</organism>
<gene>
    <name evidence="1" type="primary">rpsG</name>
    <name type="ordered locus">FP1342</name>
</gene>
<comment type="function">
    <text evidence="1">One of the primary rRNA binding proteins, it binds directly to 16S rRNA where it nucleates assembly of the head domain of the 30S subunit. Is located at the subunit interface close to the decoding center, probably blocks exit of the E-site tRNA.</text>
</comment>
<comment type="subunit">
    <text evidence="1">Part of the 30S ribosomal subunit. Contacts proteins S9 and S11.</text>
</comment>
<comment type="similarity">
    <text evidence="1">Belongs to the universal ribosomal protein uS7 family.</text>
</comment>
<accession>A6GZA2</accession>
<protein>
    <recommendedName>
        <fullName evidence="1">Small ribosomal subunit protein uS7</fullName>
    </recommendedName>
    <alternativeName>
        <fullName evidence="2">30S ribosomal protein S7</fullName>
    </alternativeName>
</protein>
<evidence type="ECO:0000255" key="1">
    <source>
        <dbReference type="HAMAP-Rule" id="MF_00480"/>
    </source>
</evidence>
<evidence type="ECO:0000305" key="2"/>
<sequence>MRKRAAKKRPLLPDPRFNDQLVTRFVNNLMWDGKKSTAFKVFYDAMDIVEAKKQDQEKSSVDIWKDALTNVMPHVEVRSRRVGGATFQIPMQIRPDRKISMAMKWMILYSRRRNEKSMAQKLASEVLAAAKEEGAAVKKRMDTHKMAEANKAFSHFRF</sequence>
<name>RS7_FLAPJ</name>
<reference key="1">
    <citation type="journal article" date="2007" name="Nat. Biotechnol.">
        <title>Complete genome sequence of the fish pathogen Flavobacterium psychrophilum.</title>
        <authorList>
            <person name="Duchaud E."/>
            <person name="Boussaha M."/>
            <person name="Loux V."/>
            <person name="Bernardet J.-F."/>
            <person name="Michel C."/>
            <person name="Kerouault B."/>
            <person name="Mondot S."/>
            <person name="Nicolas P."/>
            <person name="Bossy R."/>
            <person name="Caron C."/>
            <person name="Bessieres P."/>
            <person name="Gibrat J.-F."/>
            <person name="Claverol S."/>
            <person name="Dumetz F."/>
            <person name="Le Henaff M."/>
            <person name="Benmansour A."/>
        </authorList>
    </citation>
    <scope>NUCLEOTIDE SEQUENCE [LARGE SCALE GENOMIC DNA]</scope>
    <source>
        <strain>ATCC 49511 / DSM 21280 / CIP 103535 / JIP02/86</strain>
    </source>
</reference>
<proteinExistence type="inferred from homology"/>
<keyword id="KW-1185">Reference proteome</keyword>
<keyword id="KW-0687">Ribonucleoprotein</keyword>
<keyword id="KW-0689">Ribosomal protein</keyword>
<keyword id="KW-0694">RNA-binding</keyword>
<keyword id="KW-0699">rRNA-binding</keyword>
<keyword id="KW-0820">tRNA-binding</keyword>
<dbReference type="EMBL" id="AM398681">
    <property type="protein sequence ID" value="CAL43425.1"/>
    <property type="molecule type" value="Genomic_DNA"/>
</dbReference>
<dbReference type="RefSeq" id="WP_011963472.1">
    <property type="nucleotide sequence ID" value="NC_009613.3"/>
</dbReference>
<dbReference type="RefSeq" id="YP_001296236.1">
    <property type="nucleotide sequence ID" value="NC_009613.3"/>
</dbReference>
<dbReference type="SMR" id="A6GZA2"/>
<dbReference type="STRING" id="402612.FP1342"/>
<dbReference type="EnsemblBacteria" id="CAL43425">
    <property type="protein sequence ID" value="CAL43425"/>
    <property type="gene ID" value="FP1342"/>
</dbReference>
<dbReference type="GeneID" id="66553245"/>
<dbReference type="KEGG" id="fps:FP1342"/>
<dbReference type="PATRIC" id="fig|402612.5.peg.1359"/>
<dbReference type="eggNOG" id="COG0049">
    <property type="taxonomic scope" value="Bacteria"/>
</dbReference>
<dbReference type="HOGENOM" id="CLU_072226_1_1_10"/>
<dbReference type="OrthoDB" id="9807653at2"/>
<dbReference type="Proteomes" id="UP000006394">
    <property type="component" value="Chromosome"/>
</dbReference>
<dbReference type="GO" id="GO:0015935">
    <property type="term" value="C:small ribosomal subunit"/>
    <property type="evidence" value="ECO:0007669"/>
    <property type="project" value="InterPro"/>
</dbReference>
<dbReference type="GO" id="GO:0019843">
    <property type="term" value="F:rRNA binding"/>
    <property type="evidence" value="ECO:0007669"/>
    <property type="project" value="UniProtKB-UniRule"/>
</dbReference>
<dbReference type="GO" id="GO:0003735">
    <property type="term" value="F:structural constituent of ribosome"/>
    <property type="evidence" value="ECO:0007669"/>
    <property type="project" value="InterPro"/>
</dbReference>
<dbReference type="GO" id="GO:0000049">
    <property type="term" value="F:tRNA binding"/>
    <property type="evidence" value="ECO:0007669"/>
    <property type="project" value="UniProtKB-UniRule"/>
</dbReference>
<dbReference type="GO" id="GO:0006412">
    <property type="term" value="P:translation"/>
    <property type="evidence" value="ECO:0007669"/>
    <property type="project" value="UniProtKB-UniRule"/>
</dbReference>
<dbReference type="CDD" id="cd14869">
    <property type="entry name" value="uS7_Bacteria"/>
    <property type="match status" value="1"/>
</dbReference>
<dbReference type="FunFam" id="1.10.455.10:FF:000001">
    <property type="entry name" value="30S ribosomal protein S7"/>
    <property type="match status" value="1"/>
</dbReference>
<dbReference type="Gene3D" id="1.10.455.10">
    <property type="entry name" value="Ribosomal protein S7 domain"/>
    <property type="match status" value="1"/>
</dbReference>
<dbReference type="HAMAP" id="MF_00480_B">
    <property type="entry name" value="Ribosomal_uS7_B"/>
    <property type="match status" value="1"/>
</dbReference>
<dbReference type="InterPro" id="IPR000235">
    <property type="entry name" value="Ribosomal_uS7"/>
</dbReference>
<dbReference type="InterPro" id="IPR005717">
    <property type="entry name" value="Ribosomal_uS7_bac/org-type"/>
</dbReference>
<dbReference type="InterPro" id="IPR020606">
    <property type="entry name" value="Ribosomal_uS7_CS"/>
</dbReference>
<dbReference type="InterPro" id="IPR023798">
    <property type="entry name" value="Ribosomal_uS7_dom"/>
</dbReference>
<dbReference type="InterPro" id="IPR036823">
    <property type="entry name" value="Ribosomal_uS7_dom_sf"/>
</dbReference>
<dbReference type="NCBIfam" id="TIGR01029">
    <property type="entry name" value="rpsG_bact"/>
    <property type="match status" value="1"/>
</dbReference>
<dbReference type="PANTHER" id="PTHR11205">
    <property type="entry name" value="RIBOSOMAL PROTEIN S7"/>
    <property type="match status" value="1"/>
</dbReference>
<dbReference type="Pfam" id="PF00177">
    <property type="entry name" value="Ribosomal_S7"/>
    <property type="match status" value="1"/>
</dbReference>
<dbReference type="PIRSF" id="PIRSF002122">
    <property type="entry name" value="RPS7p_RPS7a_RPS5e_RPS7o"/>
    <property type="match status" value="1"/>
</dbReference>
<dbReference type="SUPFAM" id="SSF47973">
    <property type="entry name" value="Ribosomal protein S7"/>
    <property type="match status" value="1"/>
</dbReference>
<dbReference type="PROSITE" id="PS00052">
    <property type="entry name" value="RIBOSOMAL_S7"/>
    <property type="match status" value="1"/>
</dbReference>